<keyword id="KW-0997">Cell inner membrane</keyword>
<keyword id="KW-1003">Cell membrane</keyword>
<keyword id="KW-0472">Membrane</keyword>
<keyword id="KW-1185">Reference proteome</keyword>
<keyword id="KW-0808">Transferase</keyword>
<keyword id="KW-0812">Transmembrane</keyword>
<keyword id="KW-1133">Transmembrane helix</keyword>
<dbReference type="EC" id="2.5.1.145" evidence="1"/>
<dbReference type="EMBL" id="AE001273">
    <property type="protein sequence ID" value="AAC67845.1"/>
    <property type="molecule type" value="Genomic_DNA"/>
</dbReference>
<dbReference type="PIR" id="F71537">
    <property type="entry name" value="F71537"/>
</dbReference>
<dbReference type="RefSeq" id="NP_219757.1">
    <property type="nucleotide sequence ID" value="NC_000117.1"/>
</dbReference>
<dbReference type="RefSeq" id="WP_010725140.1">
    <property type="nucleotide sequence ID" value="NC_000117.1"/>
</dbReference>
<dbReference type="SMR" id="O84254"/>
<dbReference type="FunCoup" id="O84254">
    <property type="interactions" value="150"/>
</dbReference>
<dbReference type="STRING" id="272561.CT_252"/>
<dbReference type="EnsemblBacteria" id="AAC67845">
    <property type="protein sequence ID" value="AAC67845"/>
    <property type="gene ID" value="CT_252"/>
</dbReference>
<dbReference type="GeneID" id="884872"/>
<dbReference type="KEGG" id="ctr:CT_252"/>
<dbReference type="PATRIC" id="fig|272561.5.peg.269"/>
<dbReference type="HOGENOM" id="CLU_013386_1_0_0"/>
<dbReference type="InParanoid" id="O84254"/>
<dbReference type="OrthoDB" id="871140at2"/>
<dbReference type="UniPathway" id="UPA00664"/>
<dbReference type="Proteomes" id="UP000000431">
    <property type="component" value="Chromosome"/>
</dbReference>
<dbReference type="GO" id="GO:0005886">
    <property type="term" value="C:plasma membrane"/>
    <property type="evidence" value="ECO:0000318"/>
    <property type="project" value="GO_Central"/>
</dbReference>
<dbReference type="GO" id="GO:0008961">
    <property type="term" value="F:phosphatidylglycerol-prolipoprotein diacylglyceryl transferase activity"/>
    <property type="evidence" value="ECO:0000318"/>
    <property type="project" value="GO_Central"/>
</dbReference>
<dbReference type="GO" id="GO:0042158">
    <property type="term" value="P:lipoprotein biosynthetic process"/>
    <property type="evidence" value="ECO:0000318"/>
    <property type="project" value="GO_Central"/>
</dbReference>
<dbReference type="HAMAP" id="MF_01147">
    <property type="entry name" value="Lgt"/>
    <property type="match status" value="1"/>
</dbReference>
<dbReference type="InterPro" id="IPR001640">
    <property type="entry name" value="Lgt"/>
</dbReference>
<dbReference type="NCBIfam" id="TIGR00544">
    <property type="entry name" value="lgt"/>
    <property type="match status" value="1"/>
</dbReference>
<dbReference type="NCBIfam" id="NF000775">
    <property type="entry name" value="PRK00052.2-5"/>
    <property type="match status" value="1"/>
</dbReference>
<dbReference type="PANTHER" id="PTHR30589:SF0">
    <property type="entry name" value="PHOSPHATIDYLGLYCEROL--PROLIPOPROTEIN DIACYLGLYCERYL TRANSFERASE"/>
    <property type="match status" value="1"/>
</dbReference>
<dbReference type="PANTHER" id="PTHR30589">
    <property type="entry name" value="PROLIPOPROTEIN DIACYLGLYCERYL TRANSFERASE"/>
    <property type="match status" value="1"/>
</dbReference>
<dbReference type="Pfam" id="PF01790">
    <property type="entry name" value="LGT"/>
    <property type="match status" value="1"/>
</dbReference>
<dbReference type="PROSITE" id="PS01311">
    <property type="entry name" value="LGT"/>
    <property type="match status" value="1"/>
</dbReference>
<comment type="function">
    <text evidence="1">Catalyzes the transfer of the diacylglyceryl group from phosphatidylglycerol to the sulfhydryl group of the N-terminal cysteine of a prolipoprotein, the first step in the formation of mature lipoproteins.</text>
</comment>
<comment type="catalytic activity">
    <reaction evidence="1">
        <text>L-cysteinyl-[prolipoprotein] + a 1,2-diacyl-sn-glycero-3-phospho-(1'-sn-glycerol) = an S-1,2-diacyl-sn-glyceryl-L-cysteinyl-[prolipoprotein] + sn-glycerol 1-phosphate + H(+)</text>
        <dbReference type="Rhea" id="RHEA:56712"/>
        <dbReference type="Rhea" id="RHEA-COMP:14679"/>
        <dbReference type="Rhea" id="RHEA-COMP:14680"/>
        <dbReference type="ChEBI" id="CHEBI:15378"/>
        <dbReference type="ChEBI" id="CHEBI:29950"/>
        <dbReference type="ChEBI" id="CHEBI:57685"/>
        <dbReference type="ChEBI" id="CHEBI:64716"/>
        <dbReference type="ChEBI" id="CHEBI:140658"/>
        <dbReference type="EC" id="2.5.1.145"/>
    </reaction>
</comment>
<comment type="pathway">
    <text evidence="1">Protein modification; lipoprotein biosynthesis (diacylglyceryl transfer).</text>
</comment>
<comment type="subcellular location">
    <subcellularLocation>
        <location evidence="1">Cell inner membrane</location>
        <topology evidence="1">Multi-pass membrane protein</topology>
    </subcellularLocation>
</comment>
<comment type="similarity">
    <text evidence="1">Belongs to the Lgt family.</text>
</comment>
<accession>O84254</accession>
<organism>
    <name type="scientific">Chlamydia trachomatis serovar D (strain ATCC VR-885 / DSM 19411 / UW-3/Cx)</name>
    <dbReference type="NCBI Taxonomy" id="272561"/>
    <lineage>
        <taxon>Bacteria</taxon>
        <taxon>Pseudomonadati</taxon>
        <taxon>Chlamydiota</taxon>
        <taxon>Chlamydiia</taxon>
        <taxon>Chlamydiales</taxon>
        <taxon>Chlamydiaceae</taxon>
        <taxon>Chlamydia/Chlamydophila group</taxon>
        <taxon>Chlamydia</taxon>
    </lineage>
</organism>
<name>LGT_CHLTR</name>
<evidence type="ECO:0000255" key="1">
    <source>
        <dbReference type="HAMAP-Rule" id="MF_01147"/>
    </source>
</evidence>
<protein>
    <recommendedName>
        <fullName evidence="1">Phosphatidylglycerol--prolipoprotein diacylglyceryl transferase</fullName>
        <ecNumber evidence="1">2.5.1.145</ecNumber>
    </recommendedName>
</protein>
<gene>
    <name evidence="1" type="primary">lgt</name>
    <name type="ordered locus">CT_252</name>
</gene>
<reference key="1">
    <citation type="journal article" date="1998" name="Science">
        <title>Genome sequence of an obligate intracellular pathogen of humans: Chlamydia trachomatis.</title>
        <authorList>
            <person name="Stephens R.S."/>
            <person name="Kalman S."/>
            <person name="Lammel C.J."/>
            <person name="Fan J."/>
            <person name="Marathe R."/>
            <person name="Aravind L."/>
            <person name="Mitchell W.P."/>
            <person name="Olinger L."/>
            <person name="Tatusov R.L."/>
            <person name="Zhao Q."/>
            <person name="Koonin E.V."/>
            <person name="Davis R.W."/>
        </authorList>
    </citation>
    <scope>NUCLEOTIDE SEQUENCE [LARGE SCALE GENOMIC DNA]</scope>
    <source>
        <strain>ATCC VR-885 / DSM 19411 / UW-3/Cx</strain>
    </source>
</reference>
<sequence length="272" mass="29998">MIHWDQSRTLLSFPRVGLHLSWYGILFSLGIFLSSFSGIKLATALCKDREEKKELRTSLENFALGALLAIIIGARLAYVLFYGGSFYFENPSEIIKIWKGGLSSHGAVISVVIWAAVFSRLHIRKLPMLSVTYICDLCGAVFGCAALLIRVGNFMNQEILGTPTSMPWGVIFPNGGGQIPRHPVQLYEGLGYLVLSCILYRLCYRGVIRLGSGYSAAGALIGVAVIRFCAEFFKTHQGAWLGEENILTIGQWLSIPMIFLGVGIIWIASKKK</sequence>
<feature type="chain" id="PRO_0000172583" description="Phosphatidylglycerol--prolipoprotein diacylglyceryl transferase">
    <location>
        <begin position="1"/>
        <end position="272"/>
    </location>
</feature>
<feature type="transmembrane region" description="Helical" evidence="1">
    <location>
        <begin position="16"/>
        <end position="36"/>
    </location>
</feature>
<feature type="transmembrane region" description="Helical" evidence="1">
    <location>
        <begin position="62"/>
        <end position="82"/>
    </location>
</feature>
<feature type="transmembrane region" description="Helical" evidence="1">
    <location>
        <begin position="97"/>
        <end position="117"/>
    </location>
</feature>
<feature type="transmembrane region" description="Helical" evidence="1">
    <location>
        <begin position="129"/>
        <end position="149"/>
    </location>
</feature>
<feature type="transmembrane region" description="Helical" evidence="1">
    <location>
        <begin position="206"/>
        <end position="226"/>
    </location>
</feature>
<feature type="transmembrane region" description="Helical" evidence="1">
    <location>
        <begin position="246"/>
        <end position="266"/>
    </location>
</feature>
<feature type="binding site" evidence="1">
    <location>
        <position position="150"/>
    </location>
    <ligand>
        <name>a 1,2-diacyl-sn-glycero-3-phospho-(1'-sn-glycerol)</name>
        <dbReference type="ChEBI" id="CHEBI:64716"/>
    </ligand>
</feature>
<proteinExistence type="inferred from homology"/>